<protein>
    <recommendedName>
        <fullName>Dipeptidyl-peptidase 5</fullName>
        <ecNumber>3.4.14.-</ecNumber>
    </recommendedName>
    <alternativeName>
        <fullName>Alanyl dipeptidyl peptidase</fullName>
    </alternativeName>
    <alternativeName>
        <fullName>Dipeptidyl-peptidase V</fullName>
        <shortName>DPP V</shortName>
        <shortName>DppV</shortName>
    </alternativeName>
</protein>
<gene>
    <name type="ORF">AO090011000795-A</name>
</gene>
<reference key="1">
    <citation type="submission" date="1999-02" db="EMBL/GenBank/DDBJ databases">
        <title>Secreted alanyl dipeptidyl peptidase (DppV) of Aspergillus oryzae.</title>
        <authorList>
            <person name="Doumas A."/>
            <person name="Monod M."/>
        </authorList>
    </citation>
    <scope>NUCLEOTIDE SEQUENCE [GENOMIC DNA]</scope>
</reference>
<reference key="2">
    <citation type="journal article" date="2005" name="Nature">
        <title>Genome sequencing and analysis of Aspergillus oryzae.</title>
        <authorList>
            <person name="Machida M."/>
            <person name="Asai K."/>
            <person name="Sano M."/>
            <person name="Tanaka T."/>
            <person name="Kumagai T."/>
            <person name="Terai G."/>
            <person name="Kusumoto K."/>
            <person name="Arima T."/>
            <person name="Akita O."/>
            <person name="Kashiwagi Y."/>
            <person name="Abe K."/>
            <person name="Gomi K."/>
            <person name="Horiuchi H."/>
            <person name="Kitamoto K."/>
            <person name="Kobayashi T."/>
            <person name="Takeuchi M."/>
            <person name="Denning D.W."/>
            <person name="Galagan J.E."/>
            <person name="Nierman W.C."/>
            <person name="Yu J."/>
            <person name="Archer D.B."/>
            <person name="Bennett J.W."/>
            <person name="Bhatnagar D."/>
            <person name="Cleveland T.E."/>
            <person name="Fedorova N.D."/>
            <person name="Gotoh O."/>
            <person name="Horikawa H."/>
            <person name="Hosoyama A."/>
            <person name="Ichinomiya M."/>
            <person name="Igarashi R."/>
            <person name="Iwashita K."/>
            <person name="Juvvadi P.R."/>
            <person name="Kato M."/>
            <person name="Kato Y."/>
            <person name="Kin T."/>
            <person name="Kokubun A."/>
            <person name="Maeda H."/>
            <person name="Maeyama N."/>
            <person name="Maruyama J."/>
            <person name="Nagasaki H."/>
            <person name="Nakajima T."/>
            <person name="Oda K."/>
            <person name="Okada K."/>
            <person name="Paulsen I."/>
            <person name="Sakamoto K."/>
            <person name="Sawano T."/>
            <person name="Takahashi M."/>
            <person name="Takase K."/>
            <person name="Terabayashi Y."/>
            <person name="Wortman J.R."/>
            <person name="Yamada O."/>
            <person name="Yamagata Y."/>
            <person name="Anazawa H."/>
            <person name="Hata Y."/>
            <person name="Koide Y."/>
            <person name="Komori T."/>
            <person name="Koyama Y."/>
            <person name="Minetoki T."/>
            <person name="Suharnan S."/>
            <person name="Tanaka A."/>
            <person name="Isono K."/>
            <person name="Kuhara S."/>
            <person name="Ogasawara N."/>
            <person name="Kikuchi H."/>
        </authorList>
    </citation>
    <scope>NUCLEOTIDE SEQUENCE [LARGE SCALE GENOMIC DNA]</scope>
    <source>
        <strain>ATCC 42149 / RIB 40</strain>
    </source>
</reference>
<organism>
    <name type="scientific">Aspergillus oryzae (strain ATCC 42149 / RIB 40)</name>
    <name type="common">Yellow koji mold</name>
    <dbReference type="NCBI Taxonomy" id="510516"/>
    <lineage>
        <taxon>Eukaryota</taxon>
        <taxon>Fungi</taxon>
        <taxon>Dikarya</taxon>
        <taxon>Ascomycota</taxon>
        <taxon>Pezizomycotina</taxon>
        <taxon>Eurotiomycetes</taxon>
        <taxon>Eurotiomycetidae</taxon>
        <taxon>Eurotiales</taxon>
        <taxon>Aspergillaceae</taxon>
        <taxon>Aspergillus</taxon>
        <taxon>Aspergillus subgen. Circumdati</taxon>
    </lineage>
</organism>
<feature type="signal peptide" evidence="2">
    <location>
        <begin position="1"/>
        <end position="18"/>
    </location>
</feature>
<feature type="chain" id="PRO_0000027224" description="Dipeptidyl-peptidase 5">
    <location>
        <begin position="19"/>
        <end position="725"/>
    </location>
</feature>
<feature type="active site" description="Charge relay system" evidence="1">
    <location>
        <position position="563"/>
    </location>
</feature>
<feature type="active site" description="Charge relay system" evidence="1">
    <location>
        <position position="646"/>
    </location>
</feature>
<feature type="active site" description="Charge relay system" evidence="1">
    <location>
        <position position="678"/>
    </location>
</feature>
<feature type="glycosylation site" description="N-linked (GlcNAc...) asparagine" evidence="2">
    <location>
        <position position="75"/>
    </location>
</feature>
<feature type="glycosylation site" description="N-linked (GlcNAc...) asparagine" evidence="2">
    <location>
        <position position="96"/>
    </location>
</feature>
<feature type="glycosylation site" description="N-linked (GlcNAc...) asparagine" evidence="2">
    <location>
        <position position="153"/>
    </location>
</feature>
<feature type="glycosylation site" description="N-linked (GlcNAc...) asparagine" evidence="2">
    <location>
        <position position="258"/>
    </location>
</feature>
<feature type="glycosylation site" description="N-linked (GlcNAc...) asparagine" evidence="2">
    <location>
        <position position="383"/>
    </location>
</feature>
<feature type="glycosylation site" description="N-linked (GlcNAc...) asparagine" evidence="2">
    <location>
        <position position="453"/>
    </location>
</feature>
<feature type="glycosylation site" description="N-linked (GlcNAc...) asparagine" evidence="2">
    <location>
        <position position="610"/>
    </location>
</feature>
<feature type="sequence conflict" description="In Ref. 1; AAD41777." evidence="3" ref="1">
    <original>N</original>
    <variation>D</variation>
    <location>
        <position position="715"/>
    </location>
</feature>
<proteinExistence type="inferred from homology"/>
<evidence type="ECO:0000250" key="1"/>
<evidence type="ECO:0000255" key="2"/>
<evidence type="ECO:0000305" key="3"/>
<dbReference type="EC" id="3.4.14.-"/>
<dbReference type="EMBL" id="AF125190">
    <property type="protein sequence ID" value="AAD41777.1"/>
    <property type="molecule type" value="Genomic_DNA"/>
</dbReference>
<dbReference type="EMBL" id="AP007171">
    <property type="status" value="NOT_ANNOTATED_CDS"/>
    <property type="molecule type" value="Genomic_DNA"/>
</dbReference>
<dbReference type="RefSeq" id="XP_003190827.1">
    <property type="nucleotide sequence ID" value="XM_003190779.1"/>
</dbReference>
<dbReference type="SMR" id="Q9Y8E3"/>
<dbReference type="STRING" id="510516.Q9Y8E3"/>
<dbReference type="ESTHER" id="aspor-Q9Y8E3">
    <property type="family name" value="Prolyl_oligopeptidase_S9"/>
</dbReference>
<dbReference type="MEROPS" id="S09.012"/>
<dbReference type="Proteomes" id="UP000006564">
    <property type="component" value="Chromosome 7"/>
</dbReference>
<dbReference type="GO" id="GO:0005576">
    <property type="term" value="C:extracellular region"/>
    <property type="evidence" value="ECO:0007669"/>
    <property type="project" value="UniProtKB-SubCell"/>
</dbReference>
<dbReference type="GO" id="GO:0004252">
    <property type="term" value="F:serine-type endopeptidase activity"/>
    <property type="evidence" value="ECO:0007669"/>
    <property type="project" value="TreeGrafter"/>
</dbReference>
<dbReference type="GO" id="GO:0006508">
    <property type="term" value="P:proteolysis"/>
    <property type="evidence" value="ECO:0007669"/>
    <property type="project" value="UniProtKB-KW"/>
</dbReference>
<dbReference type="FunFam" id="2.120.10.30:FF:000109">
    <property type="entry name" value="Dipeptidyl-peptidase 5"/>
    <property type="match status" value="1"/>
</dbReference>
<dbReference type="FunFam" id="3.40.50.1820:FF:000028">
    <property type="entry name" value="S9 family peptidase"/>
    <property type="match status" value="1"/>
</dbReference>
<dbReference type="Gene3D" id="3.40.50.1820">
    <property type="entry name" value="alpha/beta hydrolase"/>
    <property type="match status" value="1"/>
</dbReference>
<dbReference type="Gene3D" id="2.120.10.30">
    <property type="entry name" value="TolB, C-terminal domain"/>
    <property type="match status" value="1"/>
</dbReference>
<dbReference type="InterPro" id="IPR011042">
    <property type="entry name" value="6-blade_b-propeller_TolB-like"/>
</dbReference>
<dbReference type="InterPro" id="IPR029058">
    <property type="entry name" value="AB_hydrolase_fold"/>
</dbReference>
<dbReference type="InterPro" id="IPR011659">
    <property type="entry name" value="PD40"/>
</dbReference>
<dbReference type="InterPro" id="IPR001375">
    <property type="entry name" value="Peptidase_S9_cat"/>
</dbReference>
<dbReference type="PANTHER" id="PTHR42776:SF11">
    <property type="entry name" value="DIPEPTIDYL-PEPTIDASE 5-RELATED"/>
    <property type="match status" value="1"/>
</dbReference>
<dbReference type="PANTHER" id="PTHR42776">
    <property type="entry name" value="SERINE PEPTIDASE S9 FAMILY MEMBER"/>
    <property type="match status" value="1"/>
</dbReference>
<dbReference type="Pfam" id="PF07676">
    <property type="entry name" value="PD40"/>
    <property type="match status" value="1"/>
</dbReference>
<dbReference type="Pfam" id="PF00326">
    <property type="entry name" value="Peptidase_S9"/>
    <property type="match status" value="1"/>
</dbReference>
<dbReference type="SUPFAM" id="SSF53474">
    <property type="entry name" value="alpha/beta-Hydrolases"/>
    <property type="match status" value="1"/>
</dbReference>
<dbReference type="SUPFAM" id="SSF82171">
    <property type="entry name" value="DPP6 N-terminal domain-like"/>
    <property type="match status" value="1"/>
</dbReference>
<name>DPP5_ASPOR</name>
<keyword id="KW-0325">Glycoprotein</keyword>
<keyword id="KW-0378">Hydrolase</keyword>
<keyword id="KW-0645">Protease</keyword>
<keyword id="KW-1185">Reference proteome</keyword>
<keyword id="KW-0964">Secreted</keyword>
<keyword id="KW-0720">Serine protease</keyword>
<keyword id="KW-0732">Signal</keyword>
<accession>Q9Y8E3</accession>
<sequence length="725" mass="80383">MGALRWLSIAATASTALALNPEGLISAPRRSEAIPNPSGDVAVFSQSQYSFKTHKTTSQWNVLDLKSGDIKLLTNDSDVSEIVWLGSDDSTVLYVNGTNADIPGGVELWVSDISDFANGYKAASLPASFSGFKVVTTDSGDVRYVAYAESWANGTAYNEELVAKPLSSARIYDSIYVRHWDYYLTTRFNAVFSGTLKKSEGKGKATYKADGDLKNLVSPVKNAESPYPPFGGASDYDLSPDGKWVAFKSKAHDIPRANYTTAYIFLVPHDGSKTAVPINGPDSPGTPEGVKGDAGSPVFSPDSKKIAYWQMADESYEADHRTLYVYTVGSEETIPSLAADWDRSLDSVKWADDDNLIIGVEDAGRSRLFSIPADAGDDYKPKNFTDGGVVSAYYQLPDSTYLVTSTAIWTSWNVYIASPEKGVIKTLATANKIDPELKGLGPEIVDEFYYEGNWTKIQAFVIYPENFDKSKSYPLLYYIHGGPQSSWLDSWSTRWNPKVFADQGYVVVAPNPTGSSGFGDALQDAIQNQWGGYPYEDLVKGWEYVNENFDFIDTDNGVAAGASYGGFMINWIQGSDLGRKFKALVSHDGTFVADAKVSTEELWFMQHEFNGTFWDNRENYRRWDPSAPERILKFSTPMLIIHSDLDYRLPVSEGLSLFNILQERGVPSRFLNFPDENHWVQNKENSLVWHQQVLGWLNKYSGVEESNEDAVSLDNTVIPVVDYNP</sequence>
<comment type="subcellular location">
    <subcellularLocation>
        <location>Secreted</location>
    </subcellularLocation>
</comment>
<comment type="similarity">
    <text evidence="3">Belongs to the peptidase S9C family.</text>
</comment>